<organism>
    <name type="scientific">Arabidopsis thaliana</name>
    <name type="common">Mouse-ear cress</name>
    <dbReference type="NCBI Taxonomy" id="3702"/>
    <lineage>
        <taxon>Eukaryota</taxon>
        <taxon>Viridiplantae</taxon>
        <taxon>Streptophyta</taxon>
        <taxon>Embryophyta</taxon>
        <taxon>Tracheophyta</taxon>
        <taxon>Spermatophyta</taxon>
        <taxon>Magnoliopsida</taxon>
        <taxon>eudicotyledons</taxon>
        <taxon>Gunneridae</taxon>
        <taxon>Pentapetalae</taxon>
        <taxon>rosids</taxon>
        <taxon>malvids</taxon>
        <taxon>Brassicales</taxon>
        <taxon>Brassicaceae</taxon>
        <taxon>Camelineae</taxon>
        <taxon>Arabidopsis</taxon>
    </lineage>
</organism>
<proteinExistence type="evidence at protein level"/>
<protein>
    <recommendedName>
        <fullName>Ethylene-responsive transcription factor 7</fullName>
        <shortName>AtERF7</shortName>
    </recommendedName>
    <alternativeName>
        <fullName>Ethylene-responsive element-binding factor 7</fullName>
        <shortName>EREBP-7</shortName>
    </alternativeName>
</protein>
<feature type="chain" id="PRO_0000112557" description="Ethylene-responsive transcription factor 7">
    <location>
        <begin position="1"/>
        <end position="244"/>
    </location>
</feature>
<feature type="DNA-binding region" description="AP2/ERF" evidence="2">
    <location>
        <begin position="26"/>
        <end position="83"/>
    </location>
</feature>
<feature type="region of interest" description="Disordered" evidence="3">
    <location>
        <begin position="136"/>
        <end position="156"/>
    </location>
</feature>
<feature type="region of interest" description="Disordered" evidence="3">
    <location>
        <begin position="181"/>
        <end position="209"/>
    </location>
</feature>
<feature type="short sequence motif" description="EAR-like (transcriptional repression)">
    <location>
        <begin position="217"/>
        <end position="223"/>
    </location>
</feature>
<feature type="compositionally biased region" description="Low complexity" evidence="3">
    <location>
        <begin position="141"/>
        <end position="152"/>
    </location>
</feature>
<feature type="compositionally biased region" description="Low complexity" evidence="3">
    <location>
        <begin position="192"/>
        <end position="208"/>
    </location>
</feature>
<evidence type="ECO:0000250" key="1"/>
<evidence type="ECO:0000255" key="2">
    <source>
        <dbReference type="PROSITE-ProRule" id="PRU00366"/>
    </source>
</evidence>
<evidence type="ECO:0000256" key="3">
    <source>
        <dbReference type="SAM" id="MobiDB-lite"/>
    </source>
</evidence>
<evidence type="ECO:0000269" key="4">
    <source>
    </source>
</evidence>
<evidence type="ECO:0000269" key="5">
    <source>
    </source>
</evidence>
<evidence type="ECO:0000305" key="6"/>
<dbReference type="EMBL" id="AB032201">
    <property type="protein sequence ID" value="BAA96653.1"/>
    <property type="molecule type" value="mRNA"/>
</dbReference>
<dbReference type="EMBL" id="AB024036">
    <property type="protein sequence ID" value="BAB02811.1"/>
    <property type="molecule type" value="Genomic_DNA"/>
</dbReference>
<dbReference type="EMBL" id="CP002686">
    <property type="protein sequence ID" value="AEE76362.1"/>
    <property type="molecule type" value="Genomic_DNA"/>
</dbReference>
<dbReference type="EMBL" id="AY037254">
    <property type="protein sequence ID" value="AAK59855.1"/>
    <property type="molecule type" value="mRNA"/>
</dbReference>
<dbReference type="EMBL" id="AY094001">
    <property type="protein sequence ID" value="AAM16262.1"/>
    <property type="molecule type" value="mRNA"/>
</dbReference>
<dbReference type="EMBL" id="AY085023">
    <property type="protein sequence ID" value="AAM61581.1"/>
    <property type="molecule type" value="mRNA"/>
</dbReference>
<dbReference type="EMBL" id="AK228460">
    <property type="protein sequence ID" value="BAF00387.1"/>
    <property type="molecule type" value="mRNA"/>
</dbReference>
<dbReference type="RefSeq" id="NP_188666.1">
    <property type="nucleotide sequence ID" value="NM_112922.3"/>
</dbReference>
<dbReference type="SMR" id="Q9LDE4"/>
<dbReference type="BioGRID" id="6907">
    <property type="interactions" value="15"/>
</dbReference>
<dbReference type="FunCoup" id="Q9LDE4">
    <property type="interactions" value="1096"/>
</dbReference>
<dbReference type="IntAct" id="Q9LDE4">
    <property type="interactions" value="11"/>
</dbReference>
<dbReference type="STRING" id="3702.Q9LDE4"/>
<dbReference type="iPTMnet" id="Q9LDE4"/>
<dbReference type="PaxDb" id="3702-AT3G20310.1"/>
<dbReference type="EnsemblPlants" id="AT3G20310.1">
    <property type="protein sequence ID" value="AT3G20310.1"/>
    <property type="gene ID" value="AT3G20310"/>
</dbReference>
<dbReference type="GeneID" id="821575"/>
<dbReference type="Gramene" id="AT3G20310.1">
    <property type="protein sequence ID" value="AT3G20310.1"/>
    <property type="gene ID" value="AT3G20310"/>
</dbReference>
<dbReference type="KEGG" id="ath:AT3G20310"/>
<dbReference type="Araport" id="AT3G20310"/>
<dbReference type="TAIR" id="AT3G20310">
    <property type="gene designation" value="ERF7"/>
</dbReference>
<dbReference type="eggNOG" id="ENOG502RYHI">
    <property type="taxonomic scope" value="Eukaryota"/>
</dbReference>
<dbReference type="HOGENOM" id="CLU_042594_5_0_1"/>
<dbReference type="InParanoid" id="Q9LDE4"/>
<dbReference type="OMA" id="HAIKRYP"/>
<dbReference type="OrthoDB" id="1931494at2759"/>
<dbReference type="PhylomeDB" id="Q9LDE4"/>
<dbReference type="PRO" id="PR:Q9LDE4"/>
<dbReference type="Proteomes" id="UP000006548">
    <property type="component" value="Chromosome 3"/>
</dbReference>
<dbReference type="ExpressionAtlas" id="Q9LDE4">
    <property type="expression patterns" value="baseline and differential"/>
</dbReference>
<dbReference type="GO" id="GO:0005634">
    <property type="term" value="C:nucleus"/>
    <property type="evidence" value="ECO:0000314"/>
    <property type="project" value="TAIR"/>
</dbReference>
<dbReference type="GO" id="GO:0003700">
    <property type="term" value="F:DNA-binding transcription factor activity"/>
    <property type="evidence" value="ECO:0000250"/>
    <property type="project" value="TAIR"/>
</dbReference>
<dbReference type="GO" id="GO:0043565">
    <property type="term" value="F:sequence-specific DNA binding"/>
    <property type="evidence" value="ECO:0000314"/>
    <property type="project" value="TAIR"/>
</dbReference>
<dbReference type="GO" id="GO:0000976">
    <property type="term" value="F:transcription cis-regulatory region binding"/>
    <property type="evidence" value="ECO:0000353"/>
    <property type="project" value="TAIR"/>
</dbReference>
<dbReference type="GO" id="GO:0006952">
    <property type="term" value="P:defense response"/>
    <property type="evidence" value="ECO:0007669"/>
    <property type="project" value="UniProtKB-KW"/>
</dbReference>
<dbReference type="GO" id="GO:0009873">
    <property type="term" value="P:ethylene-activated signaling pathway"/>
    <property type="evidence" value="ECO:0000304"/>
    <property type="project" value="TAIR"/>
</dbReference>
<dbReference type="GO" id="GO:0045892">
    <property type="term" value="P:negative regulation of DNA-templated transcription"/>
    <property type="evidence" value="ECO:0000314"/>
    <property type="project" value="TAIR"/>
</dbReference>
<dbReference type="GO" id="GO:0006355">
    <property type="term" value="P:regulation of DNA-templated transcription"/>
    <property type="evidence" value="ECO:0000304"/>
    <property type="project" value="TAIR"/>
</dbReference>
<dbReference type="GO" id="GO:0009737">
    <property type="term" value="P:response to abscisic acid"/>
    <property type="evidence" value="ECO:0000315"/>
    <property type="project" value="TAIR"/>
</dbReference>
<dbReference type="GO" id="GO:0009414">
    <property type="term" value="P:response to water deprivation"/>
    <property type="evidence" value="ECO:0000315"/>
    <property type="project" value="TAIR"/>
</dbReference>
<dbReference type="CDD" id="cd00018">
    <property type="entry name" value="AP2"/>
    <property type="match status" value="1"/>
</dbReference>
<dbReference type="FunFam" id="3.30.730.10:FF:000001">
    <property type="entry name" value="Ethylene-responsive transcription factor 2"/>
    <property type="match status" value="1"/>
</dbReference>
<dbReference type="Gene3D" id="3.30.730.10">
    <property type="entry name" value="AP2/ERF domain"/>
    <property type="match status" value="1"/>
</dbReference>
<dbReference type="InterPro" id="IPR001471">
    <property type="entry name" value="AP2/ERF_dom"/>
</dbReference>
<dbReference type="InterPro" id="IPR036955">
    <property type="entry name" value="AP2/ERF_dom_sf"/>
</dbReference>
<dbReference type="InterPro" id="IPR016177">
    <property type="entry name" value="DNA-bd_dom_sf"/>
</dbReference>
<dbReference type="PANTHER" id="PTHR31677">
    <property type="entry name" value="AP2 DOMAIN CLASS TRANSCRIPTION FACTOR"/>
    <property type="match status" value="1"/>
</dbReference>
<dbReference type="PANTHER" id="PTHR31677:SF260">
    <property type="entry name" value="ETHYLENE-RESPONSIVE TRANSCRIPTION FACTOR 7"/>
    <property type="match status" value="1"/>
</dbReference>
<dbReference type="Pfam" id="PF00847">
    <property type="entry name" value="AP2"/>
    <property type="match status" value="1"/>
</dbReference>
<dbReference type="PRINTS" id="PR00367">
    <property type="entry name" value="ETHRSPELEMNT"/>
</dbReference>
<dbReference type="SMART" id="SM00380">
    <property type="entry name" value="AP2"/>
    <property type="match status" value="1"/>
</dbReference>
<dbReference type="SUPFAM" id="SSF54171">
    <property type="entry name" value="DNA-binding domain"/>
    <property type="match status" value="1"/>
</dbReference>
<dbReference type="PROSITE" id="PS51032">
    <property type="entry name" value="AP2_ERF"/>
    <property type="match status" value="1"/>
</dbReference>
<reference key="1">
    <citation type="submission" date="2000-06" db="EMBL/GenBank/DDBJ databases">
        <title>Arabidopsis ERF family.</title>
        <authorList>
            <person name="Fujimoto S.Y."/>
            <person name="Ohta M."/>
            <person name="Usui A."/>
            <person name="Shinshi H."/>
            <person name="Ohme-Takagi M."/>
        </authorList>
    </citation>
    <scope>NUCLEOTIDE SEQUENCE [MRNA]</scope>
</reference>
<reference key="2">
    <citation type="journal article" date="2000" name="DNA Res.">
        <title>Structural analysis of Arabidopsis thaliana chromosome 3. I. Sequence features of the regions of 4,504,864 bp covered by sixty P1 and TAC clones.</title>
        <authorList>
            <person name="Sato S."/>
            <person name="Nakamura Y."/>
            <person name="Kaneko T."/>
            <person name="Katoh T."/>
            <person name="Asamizu E."/>
            <person name="Tabata S."/>
        </authorList>
    </citation>
    <scope>NUCLEOTIDE SEQUENCE [LARGE SCALE GENOMIC DNA]</scope>
    <source>
        <strain>cv. Columbia</strain>
    </source>
</reference>
<reference key="3">
    <citation type="journal article" date="2017" name="Plant J.">
        <title>Araport11: a complete reannotation of the Arabidopsis thaliana reference genome.</title>
        <authorList>
            <person name="Cheng C.Y."/>
            <person name="Krishnakumar V."/>
            <person name="Chan A.P."/>
            <person name="Thibaud-Nissen F."/>
            <person name="Schobel S."/>
            <person name="Town C.D."/>
        </authorList>
    </citation>
    <scope>GENOME REANNOTATION</scope>
    <source>
        <strain>cv. Columbia</strain>
    </source>
</reference>
<reference key="4">
    <citation type="journal article" date="2003" name="Science">
        <title>Empirical analysis of transcriptional activity in the Arabidopsis genome.</title>
        <authorList>
            <person name="Yamada K."/>
            <person name="Lim J."/>
            <person name="Dale J.M."/>
            <person name="Chen H."/>
            <person name="Shinn P."/>
            <person name="Palm C.J."/>
            <person name="Southwick A.M."/>
            <person name="Wu H.C."/>
            <person name="Kim C.J."/>
            <person name="Nguyen M."/>
            <person name="Pham P.K."/>
            <person name="Cheuk R.F."/>
            <person name="Karlin-Newmann G."/>
            <person name="Liu S.X."/>
            <person name="Lam B."/>
            <person name="Sakano H."/>
            <person name="Wu T."/>
            <person name="Yu G."/>
            <person name="Miranda M."/>
            <person name="Quach H.L."/>
            <person name="Tripp M."/>
            <person name="Chang C.H."/>
            <person name="Lee J.M."/>
            <person name="Toriumi M.J."/>
            <person name="Chan M.M."/>
            <person name="Tang C.C."/>
            <person name="Onodera C.S."/>
            <person name="Deng J.M."/>
            <person name="Akiyama K."/>
            <person name="Ansari Y."/>
            <person name="Arakawa T."/>
            <person name="Banh J."/>
            <person name="Banno F."/>
            <person name="Bowser L."/>
            <person name="Brooks S.Y."/>
            <person name="Carninci P."/>
            <person name="Chao Q."/>
            <person name="Choy N."/>
            <person name="Enju A."/>
            <person name="Goldsmith A.D."/>
            <person name="Gurjal M."/>
            <person name="Hansen N.F."/>
            <person name="Hayashizaki Y."/>
            <person name="Johnson-Hopson C."/>
            <person name="Hsuan V.W."/>
            <person name="Iida K."/>
            <person name="Karnes M."/>
            <person name="Khan S."/>
            <person name="Koesema E."/>
            <person name="Ishida J."/>
            <person name="Jiang P.X."/>
            <person name="Jones T."/>
            <person name="Kawai J."/>
            <person name="Kamiya A."/>
            <person name="Meyers C."/>
            <person name="Nakajima M."/>
            <person name="Narusaka M."/>
            <person name="Seki M."/>
            <person name="Sakurai T."/>
            <person name="Satou M."/>
            <person name="Tamse R."/>
            <person name="Vaysberg M."/>
            <person name="Wallender E.K."/>
            <person name="Wong C."/>
            <person name="Yamamura Y."/>
            <person name="Yuan S."/>
            <person name="Shinozaki K."/>
            <person name="Davis R.W."/>
            <person name="Theologis A."/>
            <person name="Ecker J.R."/>
        </authorList>
    </citation>
    <scope>NUCLEOTIDE SEQUENCE [LARGE SCALE MRNA]</scope>
    <source>
        <strain>cv. Columbia</strain>
    </source>
</reference>
<reference key="5">
    <citation type="submission" date="2002-03" db="EMBL/GenBank/DDBJ databases">
        <title>Full-length cDNA from Arabidopsis thaliana.</title>
        <authorList>
            <person name="Brover V.V."/>
            <person name="Troukhan M.E."/>
            <person name="Alexandrov N.A."/>
            <person name="Lu Y.-P."/>
            <person name="Flavell R.B."/>
            <person name="Feldmann K.A."/>
        </authorList>
    </citation>
    <scope>NUCLEOTIDE SEQUENCE [LARGE SCALE MRNA]</scope>
</reference>
<reference key="6">
    <citation type="submission" date="2006-07" db="EMBL/GenBank/DDBJ databases">
        <title>Large-scale analysis of RIKEN Arabidopsis full-length (RAFL) cDNAs.</title>
        <authorList>
            <person name="Totoki Y."/>
            <person name="Seki M."/>
            <person name="Ishida J."/>
            <person name="Nakajima M."/>
            <person name="Enju A."/>
            <person name="Kamiya A."/>
            <person name="Narusaka M."/>
            <person name="Shin-i T."/>
            <person name="Nakagawa M."/>
            <person name="Sakamoto N."/>
            <person name="Oishi K."/>
            <person name="Kohara Y."/>
            <person name="Kobayashi M."/>
            <person name="Toyoda A."/>
            <person name="Sakaki Y."/>
            <person name="Sakurai T."/>
            <person name="Iida K."/>
            <person name="Akiyama K."/>
            <person name="Satou M."/>
            <person name="Toyoda T."/>
            <person name="Konagaya A."/>
            <person name="Carninci P."/>
            <person name="Kawai J."/>
            <person name="Hayashizaki Y."/>
            <person name="Shinozaki K."/>
        </authorList>
    </citation>
    <scope>NUCLEOTIDE SEQUENCE [LARGE SCALE MRNA]</scope>
    <source>
        <strain>cv. Columbia</strain>
    </source>
</reference>
<reference key="7">
    <citation type="journal article" date="2001" name="Plant Cell">
        <title>Repression domains of class II ERF transcriptional repressors share an essential motif for active repression.</title>
        <authorList>
            <person name="Ohta M."/>
            <person name="Matsui K."/>
            <person name="Hiratsu K."/>
            <person name="Shinshi H."/>
            <person name="Ohme-Takagi M."/>
        </authorList>
    </citation>
    <scope>FUNCTION</scope>
</reference>
<reference key="8">
    <citation type="journal article" date="2005" name="Plant Cell">
        <title>Role of an Arabidopsis AP2/EREBP-type transcriptional repressor in abscisic acid and drought stress responses.</title>
        <authorList>
            <person name="Song C.-P."/>
            <person name="Agarwal M."/>
            <person name="Ohta M."/>
            <person name="Guo Y."/>
            <person name="Halfter U."/>
            <person name="Wang P."/>
            <person name="Zhu J.-K."/>
        </authorList>
    </citation>
    <scope>FUNCTION</scope>
    <scope>PHOSPHORYLATION</scope>
    <scope>SUBCELLULAR LOCATION</scope>
    <scope>INTERACTION WITH SIN3 AND HDA19</scope>
</reference>
<reference key="9">
    <citation type="journal article" date="2006" name="Plant Physiol.">
        <title>Genome-wide analysis of the ERF gene family in Arabidopsis and rice.</title>
        <authorList>
            <person name="Nakano T."/>
            <person name="Suzuki K."/>
            <person name="Fujimura T."/>
            <person name="Shinshi H."/>
        </authorList>
    </citation>
    <scope>GENE FAMILY</scope>
    <scope>NOMENCLATURE</scope>
</reference>
<keyword id="KW-0238">DNA-binding</keyword>
<keyword id="KW-0936">Ethylene signaling pathway</keyword>
<keyword id="KW-0539">Nucleus</keyword>
<keyword id="KW-0597">Phosphoprotein</keyword>
<keyword id="KW-0611">Plant defense</keyword>
<keyword id="KW-1185">Reference proteome</keyword>
<keyword id="KW-0678">Repressor</keyword>
<keyword id="KW-0804">Transcription</keyword>
<keyword id="KW-0805">Transcription regulation</keyword>
<gene>
    <name type="primary">ERF7</name>
    <name type="synonym">ERF-7</name>
    <name type="synonym">ERF083</name>
    <name type="ordered locus">At3g20310</name>
    <name type="ORF">MQC12.5</name>
</gene>
<sequence>MRKGRGSSVVGPALPVTAGGSVKEPRYRGVRKRPWGRFAAEIRDPLKKSRVWLGTFDSAVDAARAYDTAARNLRGPKAKTNFPIDCSPSSPLQPLTYLHNQNLCSPPVIQNQIDPFMDHRLYGGGNFQEQQQQQIISRPASSSMSSTVKSCSGPRPMEAAAASSSVAKPLHAIKRYPRTPPVAPEDCHSDCDSSSSVIDDGDDIASSSSRRKTPFQFDLNFPPLDGVDLFAGGIDDLHCTDLRL</sequence>
<comment type="function">
    <text evidence="4 5">Involved in the regulation of gene expression by abscisic acid, stress factors and by components of stress signal transduction pathways. Transcription factor that binds to the GCC-box pathogenesis-related promoter element. Part of a transcriptional repressor complex including a histone deacetylase.</text>
</comment>
<comment type="subunit">
    <text evidence="5">Interacts with SIN3 and HDA19.</text>
</comment>
<comment type="subcellular location">
    <subcellularLocation>
        <location evidence="2 5">Nucleus</location>
    </subcellularLocation>
</comment>
<comment type="domain">
    <text evidence="1">Contains a slightly degenerated ERF-associated amphiphilic repression (EAR) motif, which may be involved in the activity of transcriptional repression.</text>
</comment>
<comment type="PTM">
    <text evidence="5">Phosphorylated by PKS3.</text>
</comment>
<comment type="similarity">
    <text evidence="6">Belongs to the AP2/ERF transcription factor family. ERF subfamily.</text>
</comment>
<name>ERF83_ARATH</name>
<accession>Q9LDE4</accession>
<accession>Q0WR62</accession>